<feature type="chain" id="PRO_1000020896" description="Protease HtpX homolog">
    <location>
        <begin position="1"/>
        <end position="279"/>
    </location>
</feature>
<feature type="transmembrane region" description="Helical" evidence="1">
    <location>
        <begin position="4"/>
        <end position="24"/>
    </location>
</feature>
<feature type="transmembrane region" description="Helical" evidence="1">
    <location>
        <begin position="34"/>
        <end position="54"/>
    </location>
</feature>
<feature type="transmembrane region" description="Helical" evidence="1">
    <location>
        <begin position="155"/>
        <end position="175"/>
    </location>
</feature>
<feature type="transmembrane region" description="Helical" evidence="1">
    <location>
        <begin position="189"/>
        <end position="209"/>
    </location>
</feature>
<feature type="active site" evidence="1">
    <location>
        <position position="141"/>
    </location>
</feature>
<feature type="binding site" evidence="1">
    <location>
        <position position="140"/>
    </location>
    <ligand>
        <name>Zn(2+)</name>
        <dbReference type="ChEBI" id="CHEBI:29105"/>
        <note>catalytic</note>
    </ligand>
</feature>
<feature type="binding site" evidence="1">
    <location>
        <position position="144"/>
    </location>
    <ligand>
        <name>Zn(2+)</name>
        <dbReference type="ChEBI" id="CHEBI:29105"/>
        <note>catalytic</note>
    </ligand>
</feature>
<feature type="binding site" evidence="1">
    <location>
        <position position="215"/>
    </location>
    <ligand>
        <name>Zn(2+)</name>
        <dbReference type="ChEBI" id="CHEBI:29105"/>
        <note>catalytic</note>
    </ligand>
</feature>
<accession>Q5F9J4</accession>
<comment type="cofactor">
    <cofactor evidence="1">
        <name>Zn(2+)</name>
        <dbReference type="ChEBI" id="CHEBI:29105"/>
    </cofactor>
    <text evidence="1">Binds 1 zinc ion per subunit.</text>
</comment>
<comment type="subcellular location">
    <subcellularLocation>
        <location evidence="1">Cell inner membrane</location>
        <topology evidence="1">Multi-pass membrane protein</topology>
    </subcellularLocation>
</comment>
<comment type="similarity">
    <text evidence="1">Belongs to the peptidase M48B family.</text>
</comment>
<dbReference type="EC" id="3.4.24.-" evidence="1"/>
<dbReference type="EMBL" id="AE004969">
    <property type="protein sequence ID" value="AAW89143.1"/>
    <property type="molecule type" value="Genomic_DNA"/>
</dbReference>
<dbReference type="RefSeq" id="WP_010357358.1">
    <property type="nucleotide sequence ID" value="NC_002946.2"/>
</dbReference>
<dbReference type="RefSeq" id="YP_207555.1">
    <property type="nucleotide sequence ID" value="NC_002946.2"/>
</dbReference>
<dbReference type="SMR" id="Q5F9J4"/>
<dbReference type="STRING" id="242231.NGO_0399"/>
<dbReference type="MEROPS" id="M48.002"/>
<dbReference type="GeneID" id="66752737"/>
<dbReference type="KEGG" id="ngo:NGO_0399"/>
<dbReference type="PATRIC" id="fig|242231.10.peg.480"/>
<dbReference type="HOGENOM" id="CLU_042266_1_0_4"/>
<dbReference type="Proteomes" id="UP000000535">
    <property type="component" value="Chromosome"/>
</dbReference>
<dbReference type="GO" id="GO:0005886">
    <property type="term" value="C:plasma membrane"/>
    <property type="evidence" value="ECO:0007669"/>
    <property type="project" value="UniProtKB-SubCell"/>
</dbReference>
<dbReference type="GO" id="GO:0004222">
    <property type="term" value="F:metalloendopeptidase activity"/>
    <property type="evidence" value="ECO:0007669"/>
    <property type="project" value="UniProtKB-UniRule"/>
</dbReference>
<dbReference type="GO" id="GO:0008270">
    <property type="term" value="F:zinc ion binding"/>
    <property type="evidence" value="ECO:0007669"/>
    <property type="project" value="UniProtKB-UniRule"/>
</dbReference>
<dbReference type="GO" id="GO:0006508">
    <property type="term" value="P:proteolysis"/>
    <property type="evidence" value="ECO:0007669"/>
    <property type="project" value="UniProtKB-KW"/>
</dbReference>
<dbReference type="CDD" id="cd07335">
    <property type="entry name" value="M48B_HtpX_like"/>
    <property type="match status" value="1"/>
</dbReference>
<dbReference type="Gene3D" id="3.30.2010.10">
    <property type="entry name" value="Metalloproteases ('zincins'), catalytic domain"/>
    <property type="match status" value="1"/>
</dbReference>
<dbReference type="HAMAP" id="MF_00188">
    <property type="entry name" value="Pept_M48_protease_HtpX"/>
    <property type="match status" value="1"/>
</dbReference>
<dbReference type="InterPro" id="IPR050083">
    <property type="entry name" value="HtpX_protease"/>
</dbReference>
<dbReference type="InterPro" id="IPR022919">
    <property type="entry name" value="Pept_M48_protease_HtpX"/>
</dbReference>
<dbReference type="InterPro" id="IPR001915">
    <property type="entry name" value="Peptidase_M48"/>
</dbReference>
<dbReference type="NCBIfam" id="NF003965">
    <property type="entry name" value="PRK05457.1"/>
    <property type="match status" value="1"/>
</dbReference>
<dbReference type="PANTHER" id="PTHR43221">
    <property type="entry name" value="PROTEASE HTPX"/>
    <property type="match status" value="1"/>
</dbReference>
<dbReference type="PANTHER" id="PTHR43221:SF1">
    <property type="entry name" value="PROTEASE HTPX"/>
    <property type="match status" value="1"/>
</dbReference>
<dbReference type="Pfam" id="PF01435">
    <property type="entry name" value="Peptidase_M48"/>
    <property type="match status" value="1"/>
</dbReference>
<dbReference type="PROSITE" id="PS00142">
    <property type="entry name" value="ZINC_PROTEASE"/>
    <property type="match status" value="1"/>
</dbReference>
<keyword id="KW-0997">Cell inner membrane</keyword>
<keyword id="KW-1003">Cell membrane</keyword>
<keyword id="KW-0378">Hydrolase</keyword>
<keyword id="KW-0472">Membrane</keyword>
<keyword id="KW-0479">Metal-binding</keyword>
<keyword id="KW-0482">Metalloprotease</keyword>
<keyword id="KW-0645">Protease</keyword>
<keyword id="KW-1185">Reference proteome</keyword>
<keyword id="KW-0812">Transmembrane</keyword>
<keyword id="KW-1133">Transmembrane helix</keyword>
<keyword id="KW-0862">Zinc</keyword>
<evidence type="ECO:0000255" key="1">
    <source>
        <dbReference type="HAMAP-Rule" id="MF_00188"/>
    </source>
</evidence>
<gene>
    <name evidence="1" type="primary">htpX</name>
    <name type="ordered locus">NGO_0399</name>
</gene>
<sequence>MKRIFLFLATNIAVLVVINIVLAVLGINSRGGAGSLLAYSAVVGFTGSIISLLMSKFIAKQSVGAEVIDTPRTEEEAWLLNTVEAQARQWNLKTPEVAIYHSPEPNAFATGASRNSSLIAVSTGLLDHMTRDEVEAVLAHEMAHVGNGDMVTLTLIQGVVNTFVVFLSRIIANLIARNNDGSQSQGTYFLVSMVFQILFGFLASLIVMWFSRQREYRADAGAAKLVGAPKMISALQRLKGNPVDLPEEMNAMGIAGDTRDSLLSTHPSLDNRIARLKSL</sequence>
<reference key="1">
    <citation type="submission" date="2003-03" db="EMBL/GenBank/DDBJ databases">
        <title>The complete genome sequence of Neisseria gonorrhoeae.</title>
        <authorList>
            <person name="Lewis L.A."/>
            <person name="Gillaspy A.F."/>
            <person name="McLaughlin R.E."/>
            <person name="Gipson M."/>
            <person name="Ducey T.F."/>
            <person name="Ownbey T."/>
            <person name="Hartman K."/>
            <person name="Nydick C."/>
            <person name="Carson M.B."/>
            <person name="Vaughn J."/>
            <person name="Thomson C."/>
            <person name="Song L."/>
            <person name="Lin S."/>
            <person name="Yuan X."/>
            <person name="Najar F."/>
            <person name="Zhan M."/>
            <person name="Ren Q."/>
            <person name="Zhu H."/>
            <person name="Qi S."/>
            <person name="Kenton S.M."/>
            <person name="Lai H."/>
            <person name="White J.D."/>
            <person name="Clifton S."/>
            <person name="Roe B.A."/>
            <person name="Dyer D.W."/>
        </authorList>
    </citation>
    <scope>NUCLEOTIDE SEQUENCE [LARGE SCALE GENOMIC DNA]</scope>
    <source>
        <strain>ATCC 700825 / FA 1090</strain>
    </source>
</reference>
<organism>
    <name type="scientific">Neisseria gonorrhoeae (strain ATCC 700825 / FA 1090)</name>
    <dbReference type="NCBI Taxonomy" id="242231"/>
    <lineage>
        <taxon>Bacteria</taxon>
        <taxon>Pseudomonadati</taxon>
        <taxon>Pseudomonadota</taxon>
        <taxon>Betaproteobacteria</taxon>
        <taxon>Neisseriales</taxon>
        <taxon>Neisseriaceae</taxon>
        <taxon>Neisseria</taxon>
    </lineage>
</organism>
<proteinExistence type="inferred from homology"/>
<protein>
    <recommendedName>
        <fullName evidence="1">Protease HtpX homolog</fullName>
        <ecNumber evidence="1">3.4.24.-</ecNumber>
    </recommendedName>
</protein>
<name>HTPX_NEIG1</name>